<comment type="function">
    <text evidence="1">Participates actively in the response to hyperosmotic and heat shock by preventing the aggregation of stress-denatured proteins, in association with DnaK and GrpE. It is the nucleotide exchange factor for DnaK and may function as a thermosensor. Unfolded proteins bind initially to DnaJ; upon interaction with the DnaJ-bound protein, DnaK hydrolyzes its bound ATP, resulting in the formation of a stable complex. GrpE releases ADP from DnaK; ATP binding to DnaK triggers the release of the substrate protein, thus completing the reaction cycle. Several rounds of ATP-dependent interactions between DnaJ, DnaK and GrpE are required for fully efficient folding.</text>
</comment>
<comment type="subunit">
    <text evidence="1">Homodimer.</text>
</comment>
<comment type="subcellular location">
    <subcellularLocation>
        <location evidence="1">Cytoplasm</location>
    </subcellularLocation>
</comment>
<comment type="similarity">
    <text evidence="1">Belongs to the GrpE family.</text>
</comment>
<accession>Q79V15</accession>
<accession>Q9REF1</accession>
<feature type="chain" id="PRO_0000113753" description="Protein GrpE">
    <location>
        <begin position="1"/>
        <end position="201"/>
    </location>
</feature>
<feature type="region of interest" description="Disordered" evidence="2">
    <location>
        <begin position="1"/>
        <end position="32"/>
    </location>
</feature>
<evidence type="ECO:0000255" key="1">
    <source>
        <dbReference type="HAMAP-Rule" id="MF_01151"/>
    </source>
</evidence>
<evidence type="ECO:0000256" key="2">
    <source>
        <dbReference type="SAM" id="MobiDB-lite"/>
    </source>
</evidence>
<protein>
    <recommendedName>
        <fullName evidence="1">Protein GrpE</fullName>
    </recommendedName>
    <alternativeName>
        <fullName evidence="1">HSP-70 cofactor</fullName>
    </alternativeName>
</protein>
<keyword id="KW-0143">Chaperone</keyword>
<keyword id="KW-0963">Cytoplasm</keyword>
<keyword id="KW-1185">Reference proteome</keyword>
<keyword id="KW-0346">Stress response</keyword>
<dbReference type="EMBL" id="BA000040">
    <property type="protein sequence ID" value="BAC45941.1"/>
    <property type="molecule type" value="Genomic_DNA"/>
</dbReference>
<dbReference type="EMBL" id="Y09633">
    <property type="protein sequence ID" value="CAB60665.1"/>
    <property type="molecule type" value="Genomic_DNA"/>
</dbReference>
<dbReference type="RefSeq" id="NP_767316.1">
    <property type="nucleotide sequence ID" value="NC_004463.1"/>
</dbReference>
<dbReference type="RefSeq" id="WP_011083503.1">
    <property type="nucleotide sequence ID" value="NC_004463.1"/>
</dbReference>
<dbReference type="SMR" id="Q79V15"/>
<dbReference type="FunCoup" id="Q79V15">
    <property type="interactions" value="661"/>
</dbReference>
<dbReference type="STRING" id="224911.AAV28_00215"/>
<dbReference type="EnsemblBacteria" id="BAC45941">
    <property type="protein sequence ID" value="BAC45941"/>
    <property type="gene ID" value="BAC45941"/>
</dbReference>
<dbReference type="GeneID" id="46487949"/>
<dbReference type="KEGG" id="bja:blr0676"/>
<dbReference type="PATRIC" id="fig|224911.44.peg.45"/>
<dbReference type="eggNOG" id="COG0576">
    <property type="taxonomic scope" value="Bacteria"/>
</dbReference>
<dbReference type="HOGENOM" id="CLU_057217_6_2_5"/>
<dbReference type="InParanoid" id="Q79V15"/>
<dbReference type="OrthoDB" id="9789811at2"/>
<dbReference type="PhylomeDB" id="Q79V15"/>
<dbReference type="Proteomes" id="UP000002526">
    <property type="component" value="Chromosome"/>
</dbReference>
<dbReference type="GO" id="GO:0005737">
    <property type="term" value="C:cytoplasm"/>
    <property type="evidence" value="ECO:0007669"/>
    <property type="project" value="UniProtKB-SubCell"/>
</dbReference>
<dbReference type="GO" id="GO:0000774">
    <property type="term" value="F:adenyl-nucleotide exchange factor activity"/>
    <property type="evidence" value="ECO:0000318"/>
    <property type="project" value="GO_Central"/>
</dbReference>
<dbReference type="GO" id="GO:0042803">
    <property type="term" value="F:protein homodimerization activity"/>
    <property type="evidence" value="ECO:0007669"/>
    <property type="project" value="InterPro"/>
</dbReference>
<dbReference type="GO" id="GO:0051087">
    <property type="term" value="F:protein-folding chaperone binding"/>
    <property type="evidence" value="ECO:0007669"/>
    <property type="project" value="InterPro"/>
</dbReference>
<dbReference type="GO" id="GO:0051082">
    <property type="term" value="F:unfolded protein binding"/>
    <property type="evidence" value="ECO:0000318"/>
    <property type="project" value="GO_Central"/>
</dbReference>
<dbReference type="GO" id="GO:0006457">
    <property type="term" value="P:protein folding"/>
    <property type="evidence" value="ECO:0007669"/>
    <property type="project" value="InterPro"/>
</dbReference>
<dbReference type="CDD" id="cd00446">
    <property type="entry name" value="GrpE"/>
    <property type="match status" value="1"/>
</dbReference>
<dbReference type="FunFam" id="2.30.22.10:FF:000002">
    <property type="entry name" value="GrpE protein homolog"/>
    <property type="match status" value="1"/>
</dbReference>
<dbReference type="FunFam" id="3.90.20.20:FF:000021">
    <property type="entry name" value="GrpE protein homolog"/>
    <property type="match status" value="1"/>
</dbReference>
<dbReference type="Gene3D" id="3.90.20.20">
    <property type="match status" value="1"/>
</dbReference>
<dbReference type="Gene3D" id="2.30.22.10">
    <property type="entry name" value="Head domain of nucleotide exchange factor GrpE"/>
    <property type="match status" value="1"/>
</dbReference>
<dbReference type="HAMAP" id="MF_01151">
    <property type="entry name" value="GrpE"/>
    <property type="match status" value="1"/>
</dbReference>
<dbReference type="InterPro" id="IPR000740">
    <property type="entry name" value="GrpE"/>
</dbReference>
<dbReference type="InterPro" id="IPR013805">
    <property type="entry name" value="GrpE_coiled_coil"/>
</dbReference>
<dbReference type="InterPro" id="IPR009012">
    <property type="entry name" value="GrpE_head"/>
</dbReference>
<dbReference type="NCBIfam" id="NF010739">
    <property type="entry name" value="PRK14141.1"/>
    <property type="match status" value="1"/>
</dbReference>
<dbReference type="PANTHER" id="PTHR21237">
    <property type="entry name" value="GRPE PROTEIN"/>
    <property type="match status" value="1"/>
</dbReference>
<dbReference type="PANTHER" id="PTHR21237:SF23">
    <property type="entry name" value="GRPE PROTEIN HOMOLOG, MITOCHONDRIAL"/>
    <property type="match status" value="1"/>
</dbReference>
<dbReference type="Pfam" id="PF01025">
    <property type="entry name" value="GrpE"/>
    <property type="match status" value="1"/>
</dbReference>
<dbReference type="PRINTS" id="PR00773">
    <property type="entry name" value="GRPEPROTEIN"/>
</dbReference>
<dbReference type="SUPFAM" id="SSF58014">
    <property type="entry name" value="Coiled-coil domain of nucleotide exchange factor GrpE"/>
    <property type="match status" value="1"/>
</dbReference>
<dbReference type="SUPFAM" id="SSF51064">
    <property type="entry name" value="Head domain of nucleotide exchange factor GrpE"/>
    <property type="match status" value="1"/>
</dbReference>
<dbReference type="PROSITE" id="PS01071">
    <property type="entry name" value="GRPE"/>
    <property type="match status" value="1"/>
</dbReference>
<gene>
    <name evidence="1" type="primary">grpE</name>
    <name type="ordered locus">blr0676</name>
</gene>
<name>GRPE_BRADU</name>
<organism>
    <name type="scientific">Bradyrhizobium diazoefficiens (strain JCM 10833 / BCRC 13528 / IAM 13628 / NBRC 14792 / USDA 110)</name>
    <dbReference type="NCBI Taxonomy" id="224911"/>
    <lineage>
        <taxon>Bacteria</taxon>
        <taxon>Pseudomonadati</taxon>
        <taxon>Pseudomonadota</taxon>
        <taxon>Alphaproteobacteria</taxon>
        <taxon>Hyphomicrobiales</taxon>
        <taxon>Nitrobacteraceae</taxon>
        <taxon>Bradyrhizobium</taxon>
    </lineage>
</organism>
<proteinExistence type="inferred from homology"/>
<reference key="1">
    <citation type="journal article" date="1997" name="Mol. Gen. Genet.">
        <title>The dnaKJ operon belongs to the sigma32-dependent class of heat shock genes in Bradyrhizobium japonicum.</title>
        <authorList>
            <person name="Minder A.C."/>
            <person name="Narberhaus F."/>
            <person name="Babst M."/>
            <person name="Hennecke H."/>
            <person name="Fischer H.-M."/>
        </authorList>
    </citation>
    <scope>NUCLEOTIDE SEQUENCE [GENOMIC DNA]</scope>
    <source>
        <strain>USDA 110spc4</strain>
    </source>
</reference>
<reference key="2">
    <citation type="journal article" date="2002" name="DNA Res.">
        <title>Complete genomic sequence of nitrogen-fixing symbiotic bacterium Bradyrhizobium japonicum USDA110.</title>
        <authorList>
            <person name="Kaneko T."/>
            <person name="Nakamura Y."/>
            <person name="Sato S."/>
            <person name="Minamisawa K."/>
            <person name="Uchiumi T."/>
            <person name="Sasamoto S."/>
            <person name="Watanabe A."/>
            <person name="Idesawa K."/>
            <person name="Iriguchi M."/>
            <person name="Kawashima K."/>
            <person name="Kohara M."/>
            <person name="Matsumoto M."/>
            <person name="Shimpo S."/>
            <person name="Tsuruoka H."/>
            <person name="Wada T."/>
            <person name="Yamada M."/>
            <person name="Tabata S."/>
        </authorList>
    </citation>
    <scope>NUCLEOTIDE SEQUENCE [LARGE SCALE GENOMIC DNA]</scope>
    <source>
        <strain>JCM 10833 / BCRC 13528 / IAM 13628 / NBRC 14792 / USDA 110</strain>
    </source>
</reference>
<sequence>MTDRDRQPEDTTAPTGEPVVSKPYIMPDDPEPGSVELLQKEAAEARDRMLRTLAEMENLRKRTTKEVADARLYGITGFARDVLDIADNLQRALDAVPAEARAAADPGLTSLIEGVELTERSLLNALEKHGVKKFDPQGQKFDPNFQQAMFEVPDASVPAGTVVQVMQAGYTIGERVLRPALVGVAKGGAKAASAANSNEVN</sequence>